<feature type="chain" id="PRO_0000140096" description="GMP synthase [glutamine-hydrolyzing]">
    <location>
        <begin position="1"/>
        <end position="506"/>
    </location>
</feature>
<feature type="domain" description="Glutamine amidotransferase type-1" evidence="1">
    <location>
        <begin position="3"/>
        <end position="188"/>
    </location>
</feature>
<feature type="domain" description="GMPS ATP-PPase" evidence="1">
    <location>
        <begin position="189"/>
        <end position="381"/>
    </location>
</feature>
<feature type="active site" description="Nucleophile" evidence="1">
    <location>
        <position position="80"/>
    </location>
</feature>
<feature type="active site" evidence="1">
    <location>
        <position position="162"/>
    </location>
</feature>
<feature type="active site" evidence="1">
    <location>
        <position position="164"/>
    </location>
</feature>
<feature type="binding site" evidence="1">
    <location>
        <begin position="217"/>
        <end position="223"/>
    </location>
    <ligand>
        <name>ATP</name>
        <dbReference type="ChEBI" id="CHEBI:30616"/>
    </ligand>
</feature>
<comment type="function">
    <text evidence="1">Catalyzes the synthesis of GMP from XMP.</text>
</comment>
<comment type="catalytic activity">
    <reaction evidence="1">
        <text>XMP + L-glutamine + ATP + H2O = GMP + L-glutamate + AMP + diphosphate + 2 H(+)</text>
        <dbReference type="Rhea" id="RHEA:11680"/>
        <dbReference type="ChEBI" id="CHEBI:15377"/>
        <dbReference type="ChEBI" id="CHEBI:15378"/>
        <dbReference type="ChEBI" id="CHEBI:29985"/>
        <dbReference type="ChEBI" id="CHEBI:30616"/>
        <dbReference type="ChEBI" id="CHEBI:33019"/>
        <dbReference type="ChEBI" id="CHEBI:57464"/>
        <dbReference type="ChEBI" id="CHEBI:58115"/>
        <dbReference type="ChEBI" id="CHEBI:58359"/>
        <dbReference type="ChEBI" id="CHEBI:456215"/>
        <dbReference type="EC" id="6.3.5.2"/>
    </reaction>
</comment>
<comment type="pathway">
    <text evidence="1">Purine metabolism; GMP biosynthesis; GMP from XMP (L-Gln route): step 1/1.</text>
</comment>
<comment type="subunit">
    <text evidence="1">Homodimer.</text>
</comment>
<keyword id="KW-0067">ATP-binding</keyword>
<keyword id="KW-0315">Glutamine amidotransferase</keyword>
<keyword id="KW-0332">GMP biosynthesis</keyword>
<keyword id="KW-0436">Ligase</keyword>
<keyword id="KW-0547">Nucleotide-binding</keyword>
<keyword id="KW-0658">Purine biosynthesis</keyword>
<keyword id="KW-1185">Reference proteome</keyword>
<name>GUAA_BDEBA</name>
<sequence>MRGFVILDFGSQFTQLIARRLREMGFYSEIHSFEYPTEEIRKKNPYGIILSGGPNSVYEAGSPQRNVAELRNISPVMGVCYGMQLLTHQLGGKVTRAEHREYGLNYVTWSSPVQGVPERQKVWMSHGDVVEKAPEGFKIIANSDGHHPAAMQGPGVLAVQFHPEVAHTDHGMDLLKYFAQGMCKAPADWDAPHIKDILIKEAQDKVGPTDHVLVGLSGGVDSTVVATLLTKALGAERVHCVFVDNGLLRKNEYEAVLESYHRIGLNVRGVDASEEFLSALQGKSDPEDKRKTIGRVFIEVFDKSYDHKLPIKWLAQGTLYPDVIESVSSVGGSVTIKSHHNVGGLPEKMKLGLVEPVRELFKDEVRALGAQLGLPKEMLWRHPFPGPGLAIRVLGEVTKEKLQILKEADDVYISELRRRGLYEKIWQAFCVLLPVKTVGVQGDSRTYDHVLALRAVTSSDGMTADWYPFEFQFLREVSNLITNKVKGVNRVVYDVTSKPPGTIEWE</sequence>
<gene>
    <name evidence="1" type="primary">guaA</name>
    <name type="ordered locus">Bd2080</name>
</gene>
<reference key="1">
    <citation type="journal article" date="2004" name="Science">
        <title>A predator unmasked: life cycle of Bdellovibrio bacteriovorus from a genomic perspective.</title>
        <authorList>
            <person name="Rendulic S."/>
            <person name="Jagtap P."/>
            <person name="Rosinus A."/>
            <person name="Eppinger M."/>
            <person name="Baar C."/>
            <person name="Lanz C."/>
            <person name="Keller H."/>
            <person name="Lambert C."/>
            <person name="Evans K.J."/>
            <person name="Goesmann A."/>
            <person name="Meyer F."/>
            <person name="Sockett R.E."/>
            <person name="Schuster S.C."/>
        </authorList>
    </citation>
    <scope>NUCLEOTIDE SEQUENCE [LARGE SCALE GENOMIC DNA]</scope>
    <source>
        <strain>ATCC 15356 / DSM 50701 / NCIMB 9529 / HD100</strain>
    </source>
</reference>
<dbReference type="EC" id="6.3.5.2" evidence="1"/>
<dbReference type="EMBL" id="BX842651">
    <property type="protein sequence ID" value="CAE79925.1"/>
    <property type="molecule type" value="Genomic_DNA"/>
</dbReference>
<dbReference type="RefSeq" id="WP_011164527.1">
    <property type="nucleotide sequence ID" value="NC_005363.1"/>
</dbReference>
<dbReference type="SMR" id="Q6MLD2"/>
<dbReference type="STRING" id="264462.Bd2080"/>
<dbReference type="MEROPS" id="C26.957"/>
<dbReference type="GeneID" id="93013027"/>
<dbReference type="KEGG" id="bba:Bd2080"/>
<dbReference type="eggNOG" id="COG0518">
    <property type="taxonomic scope" value="Bacteria"/>
</dbReference>
<dbReference type="eggNOG" id="COG0519">
    <property type="taxonomic scope" value="Bacteria"/>
</dbReference>
<dbReference type="HOGENOM" id="CLU_014340_0_5_7"/>
<dbReference type="UniPathway" id="UPA00189">
    <property type="reaction ID" value="UER00296"/>
</dbReference>
<dbReference type="Proteomes" id="UP000008080">
    <property type="component" value="Chromosome"/>
</dbReference>
<dbReference type="GO" id="GO:0005829">
    <property type="term" value="C:cytosol"/>
    <property type="evidence" value="ECO:0007669"/>
    <property type="project" value="TreeGrafter"/>
</dbReference>
<dbReference type="GO" id="GO:0005524">
    <property type="term" value="F:ATP binding"/>
    <property type="evidence" value="ECO:0007669"/>
    <property type="project" value="UniProtKB-UniRule"/>
</dbReference>
<dbReference type="GO" id="GO:0003921">
    <property type="term" value="F:GMP synthase activity"/>
    <property type="evidence" value="ECO:0007669"/>
    <property type="project" value="InterPro"/>
</dbReference>
<dbReference type="CDD" id="cd01742">
    <property type="entry name" value="GATase1_GMP_Synthase"/>
    <property type="match status" value="1"/>
</dbReference>
<dbReference type="CDD" id="cd01997">
    <property type="entry name" value="GMP_synthase_C"/>
    <property type="match status" value="1"/>
</dbReference>
<dbReference type="FunFam" id="3.30.300.10:FF:000002">
    <property type="entry name" value="GMP synthase [glutamine-hydrolyzing]"/>
    <property type="match status" value="1"/>
</dbReference>
<dbReference type="Gene3D" id="3.30.300.10">
    <property type="match status" value="1"/>
</dbReference>
<dbReference type="Gene3D" id="3.40.50.880">
    <property type="match status" value="1"/>
</dbReference>
<dbReference type="Gene3D" id="3.40.50.620">
    <property type="entry name" value="HUPs"/>
    <property type="match status" value="1"/>
</dbReference>
<dbReference type="HAMAP" id="MF_00344">
    <property type="entry name" value="GMP_synthase"/>
    <property type="match status" value="1"/>
</dbReference>
<dbReference type="InterPro" id="IPR029062">
    <property type="entry name" value="Class_I_gatase-like"/>
</dbReference>
<dbReference type="InterPro" id="IPR017926">
    <property type="entry name" value="GATASE"/>
</dbReference>
<dbReference type="InterPro" id="IPR001674">
    <property type="entry name" value="GMP_synth_C"/>
</dbReference>
<dbReference type="InterPro" id="IPR004739">
    <property type="entry name" value="GMP_synth_GATase"/>
</dbReference>
<dbReference type="InterPro" id="IPR022955">
    <property type="entry name" value="GMP_synthase"/>
</dbReference>
<dbReference type="InterPro" id="IPR025777">
    <property type="entry name" value="GMPS_ATP_PPase_dom"/>
</dbReference>
<dbReference type="InterPro" id="IPR022310">
    <property type="entry name" value="NAD/GMP_synthase"/>
</dbReference>
<dbReference type="InterPro" id="IPR014729">
    <property type="entry name" value="Rossmann-like_a/b/a_fold"/>
</dbReference>
<dbReference type="NCBIfam" id="TIGR00884">
    <property type="entry name" value="guaA_Cterm"/>
    <property type="match status" value="1"/>
</dbReference>
<dbReference type="NCBIfam" id="TIGR00888">
    <property type="entry name" value="guaA_Nterm"/>
    <property type="match status" value="1"/>
</dbReference>
<dbReference type="NCBIfam" id="NF000848">
    <property type="entry name" value="PRK00074.1"/>
    <property type="match status" value="1"/>
</dbReference>
<dbReference type="PANTHER" id="PTHR11922:SF2">
    <property type="entry name" value="GMP SYNTHASE [GLUTAMINE-HYDROLYZING]"/>
    <property type="match status" value="1"/>
</dbReference>
<dbReference type="PANTHER" id="PTHR11922">
    <property type="entry name" value="GMP SYNTHASE-RELATED"/>
    <property type="match status" value="1"/>
</dbReference>
<dbReference type="Pfam" id="PF00117">
    <property type="entry name" value="GATase"/>
    <property type="match status" value="1"/>
</dbReference>
<dbReference type="Pfam" id="PF00958">
    <property type="entry name" value="GMP_synt_C"/>
    <property type="match status" value="1"/>
</dbReference>
<dbReference type="Pfam" id="PF02540">
    <property type="entry name" value="NAD_synthase"/>
    <property type="match status" value="1"/>
</dbReference>
<dbReference type="PRINTS" id="PR00097">
    <property type="entry name" value="ANTSNTHASEII"/>
</dbReference>
<dbReference type="PRINTS" id="PR00096">
    <property type="entry name" value="GATASE"/>
</dbReference>
<dbReference type="SUPFAM" id="SSF52402">
    <property type="entry name" value="Adenine nucleotide alpha hydrolases-like"/>
    <property type="match status" value="1"/>
</dbReference>
<dbReference type="SUPFAM" id="SSF52317">
    <property type="entry name" value="Class I glutamine amidotransferase-like"/>
    <property type="match status" value="1"/>
</dbReference>
<dbReference type="SUPFAM" id="SSF54810">
    <property type="entry name" value="GMP synthetase C-terminal dimerisation domain"/>
    <property type="match status" value="1"/>
</dbReference>
<dbReference type="PROSITE" id="PS51273">
    <property type="entry name" value="GATASE_TYPE_1"/>
    <property type="match status" value="1"/>
</dbReference>
<dbReference type="PROSITE" id="PS51553">
    <property type="entry name" value="GMPS_ATP_PPASE"/>
    <property type="match status" value="1"/>
</dbReference>
<protein>
    <recommendedName>
        <fullName evidence="1">GMP synthase [glutamine-hydrolyzing]</fullName>
        <ecNumber evidence="1">6.3.5.2</ecNumber>
    </recommendedName>
    <alternativeName>
        <fullName evidence="1">GMP synthetase</fullName>
    </alternativeName>
    <alternativeName>
        <fullName evidence="1">Glutamine amidotransferase</fullName>
    </alternativeName>
</protein>
<evidence type="ECO:0000255" key="1">
    <source>
        <dbReference type="HAMAP-Rule" id="MF_00344"/>
    </source>
</evidence>
<proteinExistence type="inferred from homology"/>
<organism>
    <name type="scientific">Bdellovibrio bacteriovorus (strain ATCC 15356 / DSM 50701 / NCIMB 9529 / HD100)</name>
    <dbReference type="NCBI Taxonomy" id="264462"/>
    <lineage>
        <taxon>Bacteria</taxon>
        <taxon>Pseudomonadati</taxon>
        <taxon>Bdellovibrionota</taxon>
        <taxon>Bdellovibrionia</taxon>
        <taxon>Bdellovibrionales</taxon>
        <taxon>Pseudobdellovibrionaceae</taxon>
        <taxon>Bdellovibrio</taxon>
    </lineage>
</organism>
<accession>Q6MLD2</accession>